<sequence length="360" mass="40326">MAAAISAAVSLPSSKSSSLLTKISSVSPQRIFLKKSTVCYRRVVSVKAQVTTDTTEAPPVKVVKESKKQEEGIVVNKFKPKNPYTGRCLLNTKITGDDAPGETWHIVFTTEGEVPYREGQSIGVIPEGIDKNGKPHKLRLYSIASSAIGDFGDSKTVSLCVKRLVYTNDGGEIVKGVCSNFLCDLKPGDEAKITGPVGKEMLMPKDPNATIIMLGTGTGIAPFRSFLWKMFFEEHEDYKFNGLAWLFLGVPTSSSLLYKEEFEKMKEKNPDNFRLDFAVSREQTNEKGEKMYIQTRMAEYAEELWELLKKDNTFVYMCGLKGMEKGIDDIMVSLAAKDGIDWLEYKKQLKRSEQWNVEVY</sequence>
<comment type="function">
    <text evidence="7 12 13">Plays a key role in regulating the relative amounts of cyclic and non-cyclic electron flow to meet the demands of the plant for ATP and reducing power (PubMed:17335513, Ref.7). Probable electron donor required for the MgProto monomethylester (MgProtoME) cyclase complex reaction to form protochlorophyllide, thus connecting chlorophyll synthesis with photosynthetic activity (PubMed:29443418).</text>
</comment>
<comment type="catalytic activity">
    <reaction evidence="13">
        <text>2 reduced [2Fe-2S]-[ferredoxin] + NADP(+) + H(+) = 2 oxidized [2Fe-2S]-[ferredoxin] + NADPH</text>
        <dbReference type="Rhea" id="RHEA:20125"/>
        <dbReference type="Rhea" id="RHEA-COMP:10000"/>
        <dbReference type="Rhea" id="RHEA-COMP:10001"/>
        <dbReference type="ChEBI" id="CHEBI:15378"/>
        <dbReference type="ChEBI" id="CHEBI:33737"/>
        <dbReference type="ChEBI" id="CHEBI:33738"/>
        <dbReference type="ChEBI" id="CHEBI:57783"/>
        <dbReference type="ChEBI" id="CHEBI:58349"/>
        <dbReference type="EC" id="1.18.1.2"/>
    </reaction>
</comment>
<comment type="cofactor">
    <cofactor>
        <name>FAD</name>
        <dbReference type="ChEBI" id="CHEBI:57692"/>
    </cofactor>
</comment>
<comment type="biophysicochemical properties">
    <kinetics>
        <KM evidence="13">3.5 uM for ferredoxin-1</KM>
        <KM evidence="13">2.5 uM for ferredoxin-2</KM>
        <KM evidence="13">4.6 uM for ferredoxin-3</KM>
    </kinetics>
</comment>
<comment type="pathway">
    <text evidence="13">Energy metabolism; photosynthesis.</text>
</comment>
<comment type="subunit">
    <text evidence="4 7 8 9 10 12">Heterodimer with LFNR2. Interacts with PGRL1A and PGRL1B. Interacts with TIC62. Component of high molecular weight thylakoid LFNRs-containing protein complexes containing LIR1, LFNR1, LFNR2, TIC62 and TROL proteins. Interacts directly with LIR1 and TIC62; LIR1 increases the affinity of LFNR1 and LFNR2 for TIC62 (By similarity). Binds to YCF54 in chloroplasts (PubMed:29443418).</text>
</comment>
<comment type="subcellular location">
    <subcellularLocation>
        <location evidence="13">Plastid</location>
        <location evidence="13">Chloroplast stroma</location>
    </subcellularLocation>
    <subcellularLocation>
        <location evidence="13">Plastid</location>
        <location evidence="13">Chloroplast thylakoid membrane</location>
        <topology evidence="13">Peripheral membrane protein</topology>
        <orientation evidence="13">Stromal side</orientation>
    </subcellularLocation>
    <text evidence="13">More abundant in the membrane fraction.</text>
</comment>
<comment type="alternative products">
    <event type="alternative splicing"/>
    <isoform>
        <id>Q9FKW6-1</id>
        <name>1</name>
        <sequence type="displayed"/>
    </isoform>
    <text>A number of isoforms are produced. According to EST sequences.</text>
</comment>
<comment type="tissue specificity">
    <text evidence="13">Expressed in shoots. Restricted to green tissues, being more abundant in siliques.</text>
</comment>
<comment type="induction">
    <text evidence="6">By nitrate.</text>
</comment>
<comment type="PTM">
    <text evidence="11">May form interchain disulfide bonds with LIR1.</text>
</comment>
<comment type="disruption phenotype">
    <text evidence="7 12">Plants have a reduced capacity for carbon fixation and prevent the association of LFNR2 with the thylakoid membrane (PubMed:17335513). Accumulation of MgProto monomethylester (MgProtoME) but altered tetrapyrrole biosynthesis (TBS) associated with reduced YCF54 levels and lower MgProtoME cyclase activity (PubMed:29443418).</text>
</comment>
<comment type="similarity">
    <text evidence="15">Belongs to the ferredoxin--NADP reductase type 1 family.</text>
</comment>
<dbReference type="EC" id="1.18.1.2" evidence="13"/>
<dbReference type="EMBL" id="AJ243705">
    <property type="protein sequence ID" value="CAB52472.1"/>
    <property type="molecule type" value="mRNA"/>
</dbReference>
<dbReference type="EMBL" id="AB011474">
    <property type="protein sequence ID" value="BAB10424.1"/>
    <property type="molecule type" value="Genomic_DNA"/>
</dbReference>
<dbReference type="EMBL" id="CP002688">
    <property type="protein sequence ID" value="AED98174.1"/>
    <property type="molecule type" value="Genomic_DNA"/>
</dbReference>
<dbReference type="EMBL" id="AY072112">
    <property type="protein sequence ID" value="AAL59934.1"/>
    <property type="molecule type" value="mRNA"/>
</dbReference>
<dbReference type="EMBL" id="AY096665">
    <property type="protein sequence ID" value="AAM20299.1"/>
    <property type="molecule type" value="mRNA"/>
</dbReference>
<dbReference type="EMBL" id="AK226411">
    <property type="protein sequence ID" value="BAE98556.1"/>
    <property type="molecule type" value="mRNA"/>
</dbReference>
<dbReference type="RefSeq" id="NP_201420.1">
    <molecule id="Q9FKW6-1"/>
    <property type="nucleotide sequence ID" value="NM_126017.5"/>
</dbReference>
<dbReference type="SMR" id="Q9FKW6"/>
<dbReference type="BioGRID" id="21993">
    <property type="interactions" value="8"/>
</dbReference>
<dbReference type="FunCoup" id="Q9FKW6">
    <property type="interactions" value="1066"/>
</dbReference>
<dbReference type="IntAct" id="Q9FKW6">
    <property type="interactions" value="1"/>
</dbReference>
<dbReference type="STRING" id="3702.Q9FKW6"/>
<dbReference type="iPTMnet" id="Q9FKW6"/>
<dbReference type="PaxDb" id="3702-AT5G66190.1"/>
<dbReference type="ProteomicsDB" id="230434">
    <molecule id="Q9FKW6-1"/>
</dbReference>
<dbReference type="EnsemblPlants" id="AT5G66190.1">
    <molecule id="Q9FKW6-1"/>
    <property type="protein sequence ID" value="AT5G66190.1"/>
    <property type="gene ID" value="AT5G66190"/>
</dbReference>
<dbReference type="GeneID" id="836751"/>
<dbReference type="Gramene" id="AT5G66190.1">
    <molecule id="Q9FKW6-1"/>
    <property type="protein sequence ID" value="AT5G66190.1"/>
    <property type="gene ID" value="AT5G66190"/>
</dbReference>
<dbReference type="KEGG" id="ath:AT5G66190"/>
<dbReference type="Araport" id="AT5G66190"/>
<dbReference type="TAIR" id="AT5G66190">
    <property type="gene designation" value="FNR1"/>
</dbReference>
<dbReference type="eggNOG" id="KOG1158">
    <property type="taxonomic scope" value="Eukaryota"/>
</dbReference>
<dbReference type="InParanoid" id="Q9FKW6"/>
<dbReference type="OMA" id="ICIRVTK"/>
<dbReference type="PhylomeDB" id="Q9FKW6"/>
<dbReference type="BioCyc" id="ARA:AT5G66190-MONOMER"/>
<dbReference type="BRENDA" id="1.18.1.2">
    <property type="organism ID" value="399"/>
</dbReference>
<dbReference type="UniPathway" id="UPA00091"/>
<dbReference type="CD-CODE" id="4299E36E">
    <property type="entry name" value="Nucleolus"/>
</dbReference>
<dbReference type="PRO" id="PR:Q9FKW6"/>
<dbReference type="Proteomes" id="UP000006548">
    <property type="component" value="Chromosome 5"/>
</dbReference>
<dbReference type="ExpressionAtlas" id="Q9FKW6">
    <property type="expression patterns" value="baseline and differential"/>
</dbReference>
<dbReference type="GO" id="GO:0048046">
    <property type="term" value="C:apoplast"/>
    <property type="evidence" value="ECO:0007005"/>
    <property type="project" value="TAIR"/>
</dbReference>
<dbReference type="GO" id="GO:0009507">
    <property type="term" value="C:chloroplast"/>
    <property type="evidence" value="ECO:0000314"/>
    <property type="project" value="TAIR"/>
</dbReference>
<dbReference type="GO" id="GO:0009941">
    <property type="term" value="C:chloroplast envelope"/>
    <property type="evidence" value="ECO:0007005"/>
    <property type="project" value="TAIR"/>
</dbReference>
<dbReference type="GO" id="GO:0009570">
    <property type="term" value="C:chloroplast stroma"/>
    <property type="evidence" value="ECO:0007005"/>
    <property type="project" value="TAIR"/>
</dbReference>
<dbReference type="GO" id="GO:0009534">
    <property type="term" value="C:chloroplast thylakoid"/>
    <property type="evidence" value="ECO:0007005"/>
    <property type="project" value="TAIR"/>
</dbReference>
<dbReference type="GO" id="GO:0009535">
    <property type="term" value="C:chloroplast thylakoid membrane"/>
    <property type="evidence" value="ECO:0007005"/>
    <property type="project" value="TAIR"/>
</dbReference>
<dbReference type="GO" id="GO:0098807">
    <property type="term" value="C:chloroplast thylakoid membrane protein complex"/>
    <property type="evidence" value="ECO:0000250"/>
    <property type="project" value="UniProtKB"/>
</dbReference>
<dbReference type="GO" id="GO:0009536">
    <property type="term" value="C:plastid"/>
    <property type="evidence" value="ECO:0007005"/>
    <property type="project" value="TAIR"/>
</dbReference>
<dbReference type="GO" id="GO:0009579">
    <property type="term" value="C:thylakoid"/>
    <property type="evidence" value="ECO:0007005"/>
    <property type="project" value="TAIR"/>
</dbReference>
<dbReference type="GO" id="GO:0031977">
    <property type="term" value="C:thylakoid lumen"/>
    <property type="evidence" value="ECO:0007005"/>
    <property type="project" value="TAIR"/>
</dbReference>
<dbReference type="GO" id="GO:0045156">
    <property type="term" value="F:electron transporter, transferring electrons within the cyclic electron transport pathway of photosynthesis activity"/>
    <property type="evidence" value="ECO:0000314"/>
    <property type="project" value="TAIR"/>
</dbReference>
<dbReference type="GO" id="GO:0045157">
    <property type="term" value="F:electron transporter, transferring electrons within the noncyclic electron transport pathway of photosynthesis activity"/>
    <property type="evidence" value="ECO:0000314"/>
    <property type="project" value="TAIR"/>
</dbReference>
<dbReference type="GO" id="GO:0004324">
    <property type="term" value="F:ferredoxin-NADP+ reductase activity"/>
    <property type="evidence" value="ECO:0007669"/>
    <property type="project" value="UniProtKB-EC"/>
</dbReference>
<dbReference type="GO" id="GO:0008266">
    <property type="term" value="F:poly(U) RNA binding"/>
    <property type="evidence" value="ECO:0000314"/>
    <property type="project" value="TAIR"/>
</dbReference>
<dbReference type="GO" id="GO:0019904">
    <property type="term" value="F:protein domain specific binding"/>
    <property type="evidence" value="ECO:0000353"/>
    <property type="project" value="CAFA"/>
</dbReference>
<dbReference type="GO" id="GO:0009767">
    <property type="term" value="P:photosynthetic electron transport chain"/>
    <property type="evidence" value="ECO:0000315"/>
    <property type="project" value="TAIR"/>
</dbReference>
<dbReference type="GO" id="GO:1901463">
    <property type="term" value="P:regulation of tetrapyrrole biosynthetic process"/>
    <property type="evidence" value="ECO:0000315"/>
    <property type="project" value="UniProtKB"/>
</dbReference>
<dbReference type="CDD" id="cd06208">
    <property type="entry name" value="CYPOR_like_FNR"/>
    <property type="match status" value="1"/>
</dbReference>
<dbReference type="FunFam" id="2.40.30.10:FF:000048">
    <property type="entry name" value="Ferredoxin--NADP reductase, chloroplastic"/>
    <property type="match status" value="1"/>
</dbReference>
<dbReference type="FunFam" id="3.40.50.80:FF:000008">
    <property type="entry name" value="Ferredoxin--NADP reductase, chloroplastic"/>
    <property type="match status" value="1"/>
</dbReference>
<dbReference type="Gene3D" id="3.40.50.80">
    <property type="entry name" value="Nucleotide-binding domain of ferredoxin-NADP reductase (FNR) module"/>
    <property type="match status" value="1"/>
</dbReference>
<dbReference type="Gene3D" id="2.40.30.10">
    <property type="entry name" value="Translation factors"/>
    <property type="match status" value="1"/>
</dbReference>
<dbReference type="InterPro" id="IPR017927">
    <property type="entry name" value="FAD-bd_FR_type"/>
</dbReference>
<dbReference type="InterPro" id="IPR001709">
    <property type="entry name" value="Flavoprot_Pyr_Nucl_cyt_Rdtase"/>
</dbReference>
<dbReference type="InterPro" id="IPR015701">
    <property type="entry name" value="FNR"/>
</dbReference>
<dbReference type="InterPro" id="IPR039261">
    <property type="entry name" value="FNR_nucleotide-bd"/>
</dbReference>
<dbReference type="InterPro" id="IPR035442">
    <property type="entry name" value="FNR_plant_Cyanobacteria"/>
</dbReference>
<dbReference type="InterPro" id="IPR001433">
    <property type="entry name" value="OxRdtase_FAD/NAD-bd"/>
</dbReference>
<dbReference type="InterPro" id="IPR017938">
    <property type="entry name" value="Riboflavin_synthase-like_b-brl"/>
</dbReference>
<dbReference type="PANTHER" id="PTHR43314">
    <property type="match status" value="1"/>
</dbReference>
<dbReference type="Pfam" id="PF00175">
    <property type="entry name" value="NAD_binding_1"/>
    <property type="match status" value="1"/>
</dbReference>
<dbReference type="PIRSF" id="PIRSF501178">
    <property type="entry name" value="FNR-PetH"/>
    <property type="match status" value="1"/>
</dbReference>
<dbReference type="PIRSF" id="PIRSF000361">
    <property type="entry name" value="Frd-NADP+_RD"/>
    <property type="match status" value="1"/>
</dbReference>
<dbReference type="PRINTS" id="PR00371">
    <property type="entry name" value="FPNCR"/>
</dbReference>
<dbReference type="SUPFAM" id="SSF52343">
    <property type="entry name" value="Ferredoxin reductase-like, C-terminal NADP-linked domain"/>
    <property type="match status" value="1"/>
</dbReference>
<dbReference type="SUPFAM" id="SSF63380">
    <property type="entry name" value="Riboflavin synthase domain-like"/>
    <property type="match status" value="1"/>
</dbReference>
<dbReference type="PROSITE" id="PS51384">
    <property type="entry name" value="FAD_FR"/>
    <property type="match status" value="1"/>
</dbReference>
<feature type="transit peptide" description="Chloroplast" evidence="13">
    <location>
        <begin position="1"/>
        <end position="49"/>
    </location>
</feature>
<feature type="chain" id="PRO_0000322572" description="Ferredoxin--NADP reductase, leaf isozyme 1, chloroplastic">
    <location>
        <begin position="50"/>
        <end position="360"/>
    </location>
</feature>
<feature type="domain" description="FAD-binding FR-type" evidence="5">
    <location>
        <begin position="81"/>
        <end position="203"/>
    </location>
</feature>
<feature type="binding site" evidence="3">
    <location>
        <begin position="139"/>
        <end position="142"/>
    </location>
    <ligand>
        <name>FAD</name>
        <dbReference type="ChEBI" id="CHEBI:57692"/>
    </ligand>
</feature>
<feature type="binding site" evidence="3">
    <location>
        <position position="142"/>
    </location>
    <ligand>
        <name>NADP(+)</name>
        <dbReference type="ChEBI" id="CHEBI:58349"/>
    </ligand>
</feature>
<feature type="binding site" evidence="3">
    <location>
        <begin position="160"/>
        <end position="162"/>
    </location>
    <ligand>
        <name>FAD</name>
        <dbReference type="ChEBI" id="CHEBI:57692"/>
    </ligand>
</feature>
<feature type="binding site" evidence="3">
    <location>
        <position position="162"/>
    </location>
    <ligand>
        <name>NADP(+)</name>
        <dbReference type="ChEBI" id="CHEBI:58349"/>
    </ligand>
</feature>
<feature type="binding site" evidence="3">
    <location>
        <position position="166"/>
    </location>
    <ligand>
        <name>FAD</name>
        <dbReference type="ChEBI" id="CHEBI:57692"/>
    </ligand>
</feature>
<feature type="binding site" evidence="3">
    <location>
        <begin position="177"/>
        <end position="179"/>
    </location>
    <ligand>
        <name>FAD</name>
        <dbReference type="ChEBI" id="CHEBI:57692"/>
    </ligand>
</feature>
<feature type="binding site" evidence="2">
    <location>
        <position position="218"/>
    </location>
    <ligand>
        <name>FAD</name>
        <dbReference type="ChEBI" id="CHEBI:57692"/>
    </ligand>
</feature>
<feature type="binding site" evidence="3">
    <location>
        <position position="218"/>
    </location>
    <ligand>
        <name>NADP(+)</name>
        <dbReference type="ChEBI" id="CHEBI:58349"/>
    </ligand>
</feature>
<feature type="binding site" evidence="3">
    <location>
        <begin position="250"/>
        <end position="251"/>
    </location>
    <ligand>
        <name>NADP(+)</name>
        <dbReference type="ChEBI" id="CHEBI:58349"/>
    </ligand>
</feature>
<feature type="binding site" evidence="3">
    <location>
        <begin position="280"/>
        <end position="281"/>
    </location>
    <ligand>
        <name>NADP(+)</name>
        <dbReference type="ChEBI" id="CHEBI:58349"/>
    </ligand>
</feature>
<feature type="binding site" evidence="3">
    <location>
        <position position="290"/>
    </location>
    <ligand>
        <name>NADP(+)</name>
        <dbReference type="ChEBI" id="CHEBI:58349"/>
    </ligand>
</feature>
<feature type="binding site" evidence="3">
    <location>
        <begin position="319"/>
        <end position="320"/>
    </location>
    <ligand>
        <name>NADP(+)</name>
        <dbReference type="ChEBI" id="CHEBI:58349"/>
    </ligand>
</feature>
<feature type="binding site" evidence="3">
    <location>
        <position position="358"/>
    </location>
    <ligand>
        <name>NADP(+)</name>
        <dbReference type="ChEBI" id="CHEBI:58349"/>
    </ligand>
</feature>
<feature type="modified residue" description="Phosphoserine" evidence="18">
    <location>
        <position position="179"/>
    </location>
</feature>
<feature type="modified residue" description="Phosphothreonine" evidence="18">
    <location>
        <position position="210"/>
    </location>
</feature>
<feature type="disulfide bond" evidence="1">
    <location>
        <begin position="178"/>
        <end position="183"/>
    </location>
</feature>
<feature type="sequence conflict" description="In Ref. 5; BAE98556." evidence="15" ref="5">
    <original>A</original>
    <variation>S</variation>
    <location>
        <position position="2"/>
    </location>
</feature>
<feature type="sequence conflict" description="In Ref. 1; CAB52472." evidence="15" ref="1">
    <original>E</original>
    <variation>G</variation>
    <location>
        <position position="113"/>
    </location>
</feature>
<feature type="sequence conflict" description="In Ref. 1; CAB52472." evidence="15" ref="1">
    <original>DFA</original>
    <variation>GFS</variation>
    <location>
        <begin position="276"/>
        <end position="278"/>
    </location>
</feature>
<feature type="sequence conflict" description="In Ref. 1; CAB52472." evidence="15" ref="1">
    <original>Y</original>
    <variation>F</variation>
    <location>
        <position position="292"/>
    </location>
</feature>
<feature type="sequence conflict" description="In Ref. 1; CAB52472." evidence="15" ref="1">
    <original>Y</original>
    <variation>F</variation>
    <location>
        <position position="345"/>
    </location>
</feature>
<feature type="sequence conflict" description="In Ref. 1; CAB52472." evidence="15" ref="1">
    <original>Y</original>
    <variation>F</variation>
    <location>
        <position position="360"/>
    </location>
</feature>
<organism>
    <name type="scientific">Arabidopsis thaliana</name>
    <name type="common">Mouse-ear cress</name>
    <dbReference type="NCBI Taxonomy" id="3702"/>
    <lineage>
        <taxon>Eukaryota</taxon>
        <taxon>Viridiplantae</taxon>
        <taxon>Streptophyta</taxon>
        <taxon>Embryophyta</taxon>
        <taxon>Tracheophyta</taxon>
        <taxon>Spermatophyta</taxon>
        <taxon>Magnoliopsida</taxon>
        <taxon>eudicotyledons</taxon>
        <taxon>Gunneridae</taxon>
        <taxon>Pentapetalae</taxon>
        <taxon>rosids</taxon>
        <taxon>malvids</taxon>
        <taxon>Brassicales</taxon>
        <taxon>Brassicaceae</taxon>
        <taxon>Camelineae</taxon>
        <taxon>Arabidopsis</taxon>
    </lineage>
</organism>
<reference key="1">
    <citation type="submission" date="1999-08" db="EMBL/GenBank/DDBJ databases">
        <title>Sequences and map position of 31 Arabidopsis thaliana cDNAs encoding organellar polypeptides.</title>
        <authorList>
            <person name="Legen J."/>
            <person name="Misera S."/>
            <person name="Herrmann R.G."/>
            <person name="Altschmied L."/>
        </authorList>
    </citation>
    <scope>NUCLEOTIDE SEQUENCE [MRNA]</scope>
    <source>
        <strain>cv. Columbia</strain>
    </source>
</reference>
<reference key="2">
    <citation type="journal article" date="1998" name="DNA Res.">
        <title>Structural analysis of Arabidopsis thaliana chromosome 5. V. Sequence features of the regions of 1,381,565 bp covered by twenty one physically assigned P1 and TAC clones.</title>
        <authorList>
            <person name="Kaneko T."/>
            <person name="Kotani H."/>
            <person name="Nakamura Y."/>
            <person name="Sato S."/>
            <person name="Asamizu E."/>
            <person name="Miyajima N."/>
            <person name="Tabata S."/>
        </authorList>
    </citation>
    <scope>NUCLEOTIDE SEQUENCE [LARGE SCALE GENOMIC DNA]</scope>
    <source>
        <strain>cv. Columbia</strain>
    </source>
</reference>
<reference key="3">
    <citation type="journal article" date="2017" name="Plant J.">
        <title>Araport11: a complete reannotation of the Arabidopsis thaliana reference genome.</title>
        <authorList>
            <person name="Cheng C.Y."/>
            <person name="Krishnakumar V."/>
            <person name="Chan A.P."/>
            <person name="Thibaud-Nissen F."/>
            <person name="Schobel S."/>
            <person name="Town C.D."/>
        </authorList>
    </citation>
    <scope>GENOME REANNOTATION</scope>
    <source>
        <strain>cv. Columbia</strain>
    </source>
</reference>
<reference key="4">
    <citation type="journal article" date="2003" name="Science">
        <title>Empirical analysis of transcriptional activity in the Arabidopsis genome.</title>
        <authorList>
            <person name="Yamada K."/>
            <person name="Lim J."/>
            <person name="Dale J.M."/>
            <person name="Chen H."/>
            <person name="Shinn P."/>
            <person name="Palm C.J."/>
            <person name="Southwick A.M."/>
            <person name="Wu H.C."/>
            <person name="Kim C.J."/>
            <person name="Nguyen M."/>
            <person name="Pham P.K."/>
            <person name="Cheuk R.F."/>
            <person name="Karlin-Newmann G."/>
            <person name="Liu S.X."/>
            <person name="Lam B."/>
            <person name="Sakano H."/>
            <person name="Wu T."/>
            <person name="Yu G."/>
            <person name="Miranda M."/>
            <person name="Quach H.L."/>
            <person name="Tripp M."/>
            <person name="Chang C.H."/>
            <person name="Lee J.M."/>
            <person name="Toriumi M.J."/>
            <person name="Chan M.M."/>
            <person name="Tang C.C."/>
            <person name="Onodera C.S."/>
            <person name="Deng J.M."/>
            <person name="Akiyama K."/>
            <person name="Ansari Y."/>
            <person name="Arakawa T."/>
            <person name="Banh J."/>
            <person name="Banno F."/>
            <person name="Bowser L."/>
            <person name="Brooks S.Y."/>
            <person name="Carninci P."/>
            <person name="Chao Q."/>
            <person name="Choy N."/>
            <person name="Enju A."/>
            <person name="Goldsmith A.D."/>
            <person name="Gurjal M."/>
            <person name="Hansen N.F."/>
            <person name="Hayashizaki Y."/>
            <person name="Johnson-Hopson C."/>
            <person name="Hsuan V.W."/>
            <person name="Iida K."/>
            <person name="Karnes M."/>
            <person name="Khan S."/>
            <person name="Koesema E."/>
            <person name="Ishida J."/>
            <person name="Jiang P.X."/>
            <person name="Jones T."/>
            <person name="Kawai J."/>
            <person name="Kamiya A."/>
            <person name="Meyers C."/>
            <person name="Nakajima M."/>
            <person name="Narusaka M."/>
            <person name="Seki M."/>
            <person name="Sakurai T."/>
            <person name="Satou M."/>
            <person name="Tamse R."/>
            <person name="Vaysberg M."/>
            <person name="Wallender E.K."/>
            <person name="Wong C."/>
            <person name="Yamamura Y."/>
            <person name="Yuan S."/>
            <person name="Shinozaki K."/>
            <person name="Davis R.W."/>
            <person name="Theologis A."/>
            <person name="Ecker J.R."/>
        </authorList>
    </citation>
    <scope>NUCLEOTIDE SEQUENCE [LARGE SCALE MRNA]</scope>
    <source>
        <strain>cv. Columbia</strain>
    </source>
</reference>
<reference key="5">
    <citation type="submission" date="2006-07" db="EMBL/GenBank/DDBJ databases">
        <title>Large-scale analysis of RIKEN Arabidopsis full-length (RAFL) cDNAs.</title>
        <authorList>
            <person name="Totoki Y."/>
            <person name="Seki M."/>
            <person name="Ishida J."/>
            <person name="Nakajima M."/>
            <person name="Enju A."/>
            <person name="Kamiya A."/>
            <person name="Narusaka M."/>
            <person name="Shin-i T."/>
            <person name="Nakagawa M."/>
            <person name="Sakamoto N."/>
            <person name="Oishi K."/>
            <person name="Kohara Y."/>
            <person name="Kobayashi M."/>
            <person name="Toyoda A."/>
            <person name="Sakaki Y."/>
            <person name="Sakurai T."/>
            <person name="Iida K."/>
            <person name="Akiyama K."/>
            <person name="Satou M."/>
            <person name="Toyoda T."/>
            <person name="Konagaya A."/>
            <person name="Carninci P."/>
            <person name="Kawai J."/>
            <person name="Hayashizaki Y."/>
            <person name="Shinozaki K."/>
        </authorList>
    </citation>
    <scope>NUCLEOTIDE SEQUENCE [LARGE SCALE MRNA]</scope>
    <source>
        <strain>cv. Columbia</strain>
    </source>
</reference>
<reference key="6">
    <citation type="journal article" date="2000" name="Plant Cell">
        <title>Genomic analysis of a nutrient response in Arabidopsis reveals diverse expression patterns and novel metabolic and potential regulatory genes induced by nitrate.</title>
        <authorList>
            <person name="Wang R."/>
            <person name="Guegler K."/>
            <person name="LaBrie S.T."/>
            <person name="Crawford N.M."/>
        </authorList>
    </citation>
    <scope>INDUCTION BY NITRATE</scope>
</reference>
<reference key="7">
    <citation type="journal article" date="2005" name="Plant Cell Environ.">
        <title>Multiple iso-proteins of FNR in Arabidopsis: evidence for different contributions to chloroplast function and nitrogen assimilation.</title>
        <authorList>
            <person name="Hanke G.T."/>
            <person name="Okutani S."/>
            <person name="Satomi Y."/>
            <person name="Takao T."/>
            <person name="Suzuki A."/>
            <person name="Hase T."/>
        </authorList>
    </citation>
    <scope>FUNCTION</scope>
    <scope>TISSUE SPECIFICITY</scope>
    <scope>SUBCELLULAR LOCATION</scope>
    <scope>IDENTIFICATION BY MASS SPECTROMETRY</scope>
    <scope>PROTEIN SEQUENCE OF 50-59</scope>
    <scope>BIOPHYSICOCHEMICAL PROPERTIES</scope>
    <scope>CATALYTIC ACTIVITY</scope>
    <scope>GENE FAMILY</scope>
    <scope>NOMENCLATURE</scope>
    <source>
        <strain>cv. Columbia</strain>
    </source>
</reference>
<reference key="8">
    <citation type="journal article" date="2007" name="Plant J.">
        <title>Structural and functional characterization of ferredoxin-NADP+-oxidoreductase using knock-out mutants of Arabidopsis.</title>
        <authorList>
            <person name="Lintala M."/>
            <person name="Allahverdiyeva Y."/>
            <person name="Kidron H."/>
            <person name="Piippo M."/>
            <person name="Battchikova N."/>
            <person name="Suorsa M."/>
            <person name="Rintamaeki E."/>
            <person name="Salminen T.A."/>
            <person name="Aro E.-M."/>
            <person name="Mulo P."/>
        </authorList>
    </citation>
    <scope>FUNCTION</scope>
    <scope>IDENTIFICATION BY MASS SPECTROMETRY</scope>
    <scope>SUBUNIT</scope>
    <scope>DISRUPTION PHENOTYPE</scope>
</reference>
<reference key="9">
    <citation type="journal article" date="2008" name="Cell">
        <title>A complex containing PGRL1 and PGR5 is involved in the switch between linear and cyclic electron flow in Arabidopsis.</title>
        <authorList>
            <person name="DalCorso G."/>
            <person name="Pesaresi P."/>
            <person name="Masiero S."/>
            <person name="Aseeva E."/>
            <person name="Schuenemann D."/>
            <person name="Finazzi G."/>
            <person name="Joliot P."/>
            <person name="Barbato R."/>
            <person name="Leister D."/>
        </authorList>
    </citation>
    <scope>INTERACTION WITH PGRL1A AND PGRL1B</scope>
    <source>
        <strain>cv. Columbia</strain>
    </source>
</reference>
<reference key="10">
    <citation type="journal article" date="2009" name="Plant Cell">
        <title>Arabidopsis Tic62 and ferredoxin-NADP(H) oxidoreductase form light-regulated complexes that are integrated into the chloroplast redox poise.</title>
        <authorList>
            <person name="Benz J.P."/>
            <person name="Stengel A."/>
            <person name="Lintala M."/>
            <person name="Lee Y.H."/>
            <person name="Weber A."/>
            <person name="Philippar K."/>
            <person name="Guegel I.L."/>
            <person name="Kaieda S."/>
            <person name="Ikegami T."/>
            <person name="Mulo P."/>
            <person name="Soll J."/>
            <person name="Boelter B."/>
        </authorList>
    </citation>
    <scope>INTERACTION WITH TIC62</scope>
</reference>
<reference key="11">
    <citation type="journal article" date="2011" name="Biochim. Biophys. Acta">
        <title>Chloroplast-targeted ferredoxin-NADP(+) oxidoreductase (FNR): structure, function and location.</title>
        <authorList>
            <person name="Mulo P."/>
        </authorList>
    </citation>
    <scope>INTERACTION WITH TIC62</scope>
</reference>
<reference key="12">
    <citation type="journal article" date="2012" name="J. Proteome Res.">
        <title>Identification of phosphoproteins in Arabidopsis thaliana leaves using polyethylene glycol fractionation, immobilized metal-ion affinity chromatography, two-dimensional gel electrophoresis and mass spectrometry.</title>
        <authorList>
            <person name="Aryal U.K."/>
            <person name="Krochko J.E."/>
            <person name="Ross A.R."/>
        </authorList>
    </citation>
    <scope>PHOSPHORYLATION [LARGE SCALE ANALYSIS] AT SER-179 AND THR-210</scope>
    <scope>IDENTIFICATION BY MASS SPECTROMETRY [LARGE SCALE ANALYSIS]</scope>
</reference>
<reference key="13">
    <citation type="journal article" date="2016" name="Plant Cell">
        <title>LIGHT-INDUCED RICE1 regulates light-dependent attachment of LEAF-TYPE FERREDOXIN-NADP+ OXIDOREDUCTASE to the thylakoid membrane in rice and Arabidopsis.</title>
        <authorList>
            <person name="Yang C."/>
            <person name="Hu H."/>
            <person name="Ren H."/>
            <person name="Kong Y."/>
            <person name="Lin H."/>
            <person name="Guo J."/>
            <person name="Wang L."/>
            <person name="He Y."/>
            <person name="Ding X."/>
            <person name="Grabsztunowicz M."/>
            <person name="Mulo P."/>
            <person name="Chen T."/>
            <person name="Liu Y."/>
            <person name="Wu Z."/>
            <person name="Wu Y."/>
            <person name="Mao C."/>
            <person name="Wu P."/>
            <person name="Mo X."/>
        </authorList>
    </citation>
    <scope>DISULFIDE BOND</scope>
</reference>
<reference key="14">
    <citation type="journal article" date="2018" name="Plant J.">
        <title>Potential roles of YCF54 and ferredoxin-NADPH reductase for magnesium protoporphyrin monomethylester cyclase.</title>
        <authorList>
            <person name="Herbst J."/>
            <person name="Girke A."/>
            <person name="Hajirezaei M.R."/>
            <person name="Hanke G."/>
            <person name="Grimm B."/>
        </authorList>
    </citation>
    <scope>FUNCTION</scope>
    <scope>DISRUPTION PHENOTYPE</scope>
    <scope>INTERACTION WITH YCF54</scope>
    <source>
        <strain>cv. Columbia</strain>
    </source>
</reference>
<gene>
    <name evidence="14" type="primary">LFNR1</name>
    <name type="synonym">PETH1</name>
    <name evidence="16" type="ordered locus">At5g66190</name>
    <name evidence="17" type="ORF">K2A18.27</name>
</gene>
<name>FNRL1_ARATH</name>
<proteinExistence type="evidence at protein level"/>
<protein>
    <recommendedName>
        <fullName>Ferredoxin--NADP reductase, leaf isozyme 1, chloroplastic</fullName>
        <ecNumber evidence="13">1.18.1.2</ecNumber>
    </recommendedName>
    <alternativeName>
        <fullName evidence="14">Leaf FNR 1</fullName>
        <shortName evidence="14">AtLFNR1</shortName>
        <shortName evidence="14">FNR-1</shortName>
    </alternativeName>
</protein>
<keyword id="KW-0025">Alternative splicing</keyword>
<keyword id="KW-0150">Chloroplast</keyword>
<keyword id="KW-0903">Direct protein sequencing</keyword>
<keyword id="KW-1015">Disulfide bond</keyword>
<keyword id="KW-0249">Electron transport</keyword>
<keyword id="KW-0274">FAD</keyword>
<keyword id="KW-0285">Flavoprotein</keyword>
<keyword id="KW-0472">Membrane</keyword>
<keyword id="KW-0521">NADP</keyword>
<keyword id="KW-0560">Oxidoreductase</keyword>
<keyword id="KW-0597">Phosphoprotein</keyword>
<keyword id="KW-0602">Photosynthesis</keyword>
<keyword id="KW-0934">Plastid</keyword>
<keyword id="KW-1185">Reference proteome</keyword>
<keyword id="KW-0793">Thylakoid</keyword>
<keyword id="KW-0809">Transit peptide</keyword>
<keyword id="KW-0813">Transport</keyword>
<accession>Q9FKW6</accession>
<accession>Q0WWE2</accession>
<accession>Q9SUJ3</accession>
<evidence type="ECO:0000250" key="1"/>
<evidence type="ECO:0000250" key="2">
    <source>
        <dbReference type="UniProtKB" id="P00455"/>
    </source>
</evidence>
<evidence type="ECO:0000250" key="3">
    <source>
        <dbReference type="UniProtKB" id="P10933"/>
    </source>
</evidence>
<evidence type="ECO:0000250" key="4">
    <source>
        <dbReference type="UniProtKB" id="P41344"/>
    </source>
</evidence>
<evidence type="ECO:0000255" key="5">
    <source>
        <dbReference type="PROSITE-ProRule" id="PRU00716"/>
    </source>
</evidence>
<evidence type="ECO:0000269" key="6">
    <source>
    </source>
</evidence>
<evidence type="ECO:0000269" key="7">
    <source>
    </source>
</evidence>
<evidence type="ECO:0000269" key="8">
    <source>
    </source>
</evidence>
<evidence type="ECO:0000269" key="9">
    <source>
    </source>
</evidence>
<evidence type="ECO:0000269" key="10">
    <source>
    </source>
</evidence>
<evidence type="ECO:0000269" key="11">
    <source>
    </source>
</evidence>
<evidence type="ECO:0000269" key="12">
    <source>
    </source>
</evidence>
<evidence type="ECO:0000269" key="13">
    <source ref="7"/>
</evidence>
<evidence type="ECO:0000303" key="14">
    <source ref="7"/>
</evidence>
<evidence type="ECO:0000305" key="15"/>
<evidence type="ECO:0000312" key="16">
    <source>
        <dbReference type="Araport" id="AT5G66190"/>
    </source>
</evidence>
<evidence type="ECO:0000312" key="17">
    <source>
        <dbReference type="EMBL" id="BAB10424.1"/>
    </source>
</evidence>
<evidence type="ECO:0007744" key="18">
    <source>
    </source>
</evidence>